<accession>Q889W6</accession>
<evidence type="ECO:0000255" key="1">
    <source>
        <dbReference type="HAMAP-Rule" id="MF_01331"/>
    </source>
</evidence>
<evidence type="ECO:0000305" key="2"/>
<sequence length="110" mass="11893">MEVAAKLSGARISAQKARLVADQIRGKKVGEALNLLAFSSKKAAEILKKVLESAVANAEHNEGADVDDLKVSTVFVNEGRSLKRIMPRAKGRADRIVKRSCHITVKVADK</sequence>
<gene>
    <name evidence="1" type="primary">rplV</name>
    <name type="ordered locus">PSPTO_0631</name>
</gene>
<protein>
    <recommendedName>
        <fullName evidence="1">Large ribosomal subunit protein uL22</fullName>
    </recommendedName>
    <alternativeName>
        <fullName evidence="2">50S ribosomal protein L22</fullName>
    </alternativeName>
</protein>
<dbReference type="EMBL" id="AE016853">
    <property type="protein sequence ID" value="AAO54173.1"/>
    <property type="molecule type" value="Genomic_DNA"/>
</dbReference>
<dbReference type="RefSeq" id="NP_790478.1">
    <property type="nucleotide sequence ID" value="NC_004578.1"/>
</dbReference>
<dbReference type="RefSeq" id="WP_002555485.1">
    <property type="nucleotide sequence ID" value="NC_004578.1"/>
</dbReference>
<dbReference type="SMR" id="Q889W6"/>
<dbReference type="STRING" id="223283.PSPTO_0631"/>
<dbReference type="GeneID" id="96221025"/>
<dbReference type="KEGG" id="pst:PSPTO_0631"/>
<dbReference type="PATRIC" id="fig|223283.9.peg.637"/>
<dbReference type="eggNOG" id="COG0091">
    <property type="taxonomic scope" value="Bacteria"/>
</dbReference>
<dbReference type="HOGENOM" id="CLU_083987_3_3_6"/>
<dbReference type="OrthoDB" id="9805969at2"/>
<dbReference type="PhylomeDB" id="Q889W6"/>
<dbReference type="Proteomes" id="UP000002515">
    <property type="component" value="Chromosome"/>
</dbReference>
<dbReference type="GO" id="GO:0022625">
    <property type="term" value="C:cytosolic large ribosomal subunit"/>
    <property type="evidence" value="ECO:0007669"/>
    <property type="project" value="TreeGrafter"/>
</dbReference>
<dbReference type="GO" id="GO:0019843">
    <property type="term" value="F:rRNA binding"/>
    <property type="evidence" value="ECO:0007669"/>
    <property type="project" value="UniProtKB-UniRule"/>
</dbReference>
<dbReference type="GO" id="GO:0003735">
    <property type="term" value="F:structural constituent of ribosome"/>
    <property type="evidence" value="ECO:0007669"/>
    <property type="project" value="InterPro"/>
</dbReference>
<dbReference type="GO" id="GO:0006412">
    <property type="term" value="P:translation"/>
    <property type="evidence" value="ECO:0007669"/>
    <property type="project" value="UniProtKB-UniRule"/>
</dbReference>
<dbReference type="CDD" id="cd00336">
    <property type="entry name" value="Ribosomal_L22"/>
    <property type="match status" value="1"/>
</dbReference>
<dbReference type="FunFam" id="3.90.470.10:FF:000001">
    <property type="entry name" value="50S ribosomal protein L22"/>
    <property type="match status" value="1"/>
</dbReference>
<dbReference type="Gene3D" id="3.90.470.10">
    <property type="entry name" value="Ribosomal protein L22/L17"/>
    <property type="match status" value="1"/>
</dbReference>
<dbReference type="HAMAP" id="MF_01331_B">
    <property type="entry name" value="Ribosomal_uL22_B"/>
    <property type="match status" value="1"/>
</dbReference>
<dbReference type="InterPro" id="IPR001063">
    <property type="entry name" value="Ribosomal_uL22"/>
</dbReference>
<dbReference type="InterPro" id="IPR005727">
    <property type="entry name" value="Ribosomal_uL22_bac/chlpt-type"/>
</dbReference>
<dbReference type="InterPro" id="IPR047867">
    <property type="entry name" value="Ribosomal_uL22_bac/org-type"/>
</dbReference>
<dbReference type="InterPro" id="IPR018260">
    <property type="entry name" value="Ribosomal_uL22_CS"/>
</dbReference>
<dbReference type="InterPro" id="IPR036394">
    <property type="entry name" value="Ribosomal_uL22_sf"/>
</dbReference>
<dbReference type="NCBIfam" id="TIGR01044">
    <property type="entry name" value="rplV_bact"/>
    <property type="match status" value="1"/>
</dbReference>
<dbReference type="PANTHER" id="PTHR13501">
    <property type="entry name" value="CHLOROPLAST 50S RIBOSOMAL PROTEIN L22-RELATED"/>
    <property type="match status" value="1"/>
</dbReference>
<dbReference type="PANTHER" id="PTHR13501:SF8">
    <property type="entry name" value="LARGE RIBOSOMAL SUBUNIT PROTEIN UL22M"/>
    <property type="match status" value="1"/>
</dbReference>
<dbReference type="Pfam" id="PF00237">
    <property type="entry name" value="Ribosomal_L22"/>
    <property type="match status" value="1"/>
</dbReference>
<dbReference type="SUPFAM" id="SSF54843">
    <property type="entry name" value="Ribosomal protein L22"/>
    <property type="match status" value="1"/>
</dbReference>
<dbReference type="PROSITE" id="PS00464">
    <property type="entry name" value="RIBOSOMAL_L22"/>
    <property type="match status" value="1"/>
</dbReference>
<reference key="1">
    <citation type="journal article" date="2003" name="Proc. Natl. Acad. Sci. U.S.A.">
        <title>The complete genome sequence of the Arabidopsis and tomato pathogen Pseudomonas syringae pv. tomato DC3000.</title>
        <authorList>
            <person name="Buell C.R."/>
            <person name="Joardar V."/>
            <person name="Lindeberg M."/>
            <person name="Selengut J."/>
            <person name="Paulsen I.T."/>
            <person name="Gwinn M.L."/>
            <person name="Dodson R.J."/>
            <person name="DeBoy R.T."/>
            <person name="Durkin A.S."/>
            <person name="Kolonay J.F."/>
            <person name="Madupu R."/>
            <person name="Daugherty S.C."/>
            <person name="Brinkac L.M."/>
            <person name="Beanan M.J."/>
            <person name="Haft D.H."/>
            <person name="Nelson W.C."/>
            <person name="Davidsen T.M."/>
            <person name="Zafar N."/>
            <person name="Zhou L."/>
            <person name="Liu J."/>
            <person name="Yuan Q."/>
            <person name="Khouri H.M."/>
            <person name="Fedorova N.B."/>
            <person name="Tran B."/>
            <person name="Russell D."/>
            <person name="Berry K.J."/>
            <person name="Utterback T.R."/>
            <person name="Van Aken S.E."/>
            <person name="Feldblyum T.V."/>
            <person name="D'Ascenzo M."/>
            <person name="Deng W.-L."/>
            <person name="Ramos A.R."/>
            <person name="Alfano J.R."/>
            <person name="Cartinhour S."/>
            <person name="Chatterjee A.K."/>
            <person name="Delaney T.P."/>
            <person name="Lazarowitz S.G."/>
            <person name="Martin G.B."/>
            <person name="Schneider D.J."/>
            <person name="Tang X."/>
            <person name="Bender C.L."/>
            <person name="White O."/>
            <person name="Fraser C.M."/>
            <person name="Collmer A."/>
        </authorList>
    </citation>
    <scope>NUCLEOTIDE SEQUENCE [LARGE SCALE GENOMIC DNA]</scope>
    <source>
        <strain>ATCC BAA-871 / DC3000</strain>
    </source>
</reference>
<comment type="function">
    <text evidence="1">This protein binds specifically to 23S rRNA; its binding is stimulated by other ribosomal proteins, e.g. L4, L17, and L20. It is important during the early stages of 50S assembly. It makes multiple contacts with different domains of the 23S rRNA in the assembled 50S subunit and ribosome (By similarity).</text>
</comment>
<comment type="function">
    <text evidence="1">The globular domain of the protein is located near the polypeptide exit tunnel on the outside of the subunit, while an extended beta-hairpin is found that lines the wall of the exit tunnel in the center of the 70S ribosome.</text>
</comment>
<comment type="subunit">
    <text evidence="1">Part of the 50S ribosomal subunit.</text>
</comment>
<comment type="similarity">
    <text evidence="1">Belongs to the universal ribosomal protein uL22 family.</text>
</comment>
<organism>
    <name type="scientific">Pseudomonas syringae pv. tomato (strain ATCC BAA-871 / DC3000)</name>
    <dbReference type="NCBI Taxonomy" id="223283"/>
    <lineage>
        <taxon>Bacteria</taxon>
        <taxon>Pseudomonadati</taxon>
        <taxon>Pseudomonadota</taxon>
        <taxon>Gammaproteobacteria</taxon>
        <taxon>Pseudomonadales</taxon>
        <taxon>Pseudomonadaceae</taxon>
        <taxon>Pseudomonas</taxon>
    </lineage>
</organism>
<feature type="chain" id="PRO_0000125207" description="Large ribosomal subunit protein uL22">
    <location>
        <begin position="1"/>
        <end position="110"/>
    </location>
</feature>
<name>RL22_PSESM</name>
<keyword id="KW-1185">Reference proteome</keyword>
<keyword id="KW-0687">Ribonucleoprotein</keyword>
<keyword id="KW-0689">Ribosomal protein</keyword>
<keyword id="KW-0694">RNA-binding</keyword>
<keyword id="KW-0699">rRNA-binding</keyword>
<proteinExistence type="inferred from homology"/>